<comment type="function">
    <text evidence="1">One of the early assembly proteins it binds 23S rRNA. One of the proteins that surrounds the polypeptide exit tunnel on the outside of the ribosome. Forms the main docking site for trigger factor binding to the ribosome.</text>
</comment>
<comment type="subunit">
    <text evidence="1">Part of the 50S ribosomal subunit. Contacts protein L29, and trigger factor when it is bound to the ribosome.</text>
</comment>
<comment type="similarity">
    <text evidence="1">Belongs to the universal ribosomal protein uL23 family.</text>
</comment>
<feature type="chain" id="PRO_0000272858" description="Large ribosomal subunit protein uL23">
    <location>
        <begin position="1"/>
        <end position="100"/>
    </location>
</feature>
<name>RL23_SYNS9</name>
<dbReference type="EMBL" id="CP000097">
    <property type="protein sequence ID" value="ABB26915.1"/>
    <property type="molecule type" value="Genomic_DNA"/>
</dbReference>
<dbReference type="RefSeq" id="WP_009788932.1">
    <property type="nucleotide sequence ID" value="NC_007513.1"/>
</dbReference>
<dbReference type="SMR" id="Q3AUW1"/>
<dbReference type="STRING" id="316279.Syncc9902_1957"/>
<dbReference type="KEGG" id="sye:Syncc9902_1957"/>
<dbReference type="eggNOG" id="COG0089">
    <property type="taxonomic scope" value="Bacteria"/>
</dbReference>
<dbReference type="HOGENOM" id="CLU_037562_3_2_3"/>
<dbReference type="OrthoDB" id="9793353at2"/>
<dbReference type="Proteomes" id="UP000002712">
    <property type="component" value="Chromosome"/>
</dbReference>
<dbReference type="GO" id="GO:1990904">
    <property type="term" value="C:ribonucleoprotein complex"/>
    <property type="evidence" value="ECO:0007669"/>
    <property type="project" value="UniProtKB-KW"/>
</dbReference>
<dbReference type="GO" id="GO:0005840">
    <property type="term" value="C:ribosome"/>
    <property type="evidence" value="ECO:0007669"/>
    <property type="project" value="UniProtKB-KW"/>
</dbReference>
<dbReference type="GO" id="GO:0019843">
    <property type="term" value="F:rRNA binding"/>
    <property type="evidence" value="ECO:0007669"/>
    <property type="project" value="UniProtKB-UniRule"/>
</dbReference>
<dbReference type="GO" id="GO:0003735">
    <property type="term" value="F:structural constituent of ribosome"/>
    <property type="evidence" value="ECO:0007669"/>
    <property type="project" value="InterPro"/>
</dbReference>
<dbReference type="GO" id="GO:0006412">
    <property type="term" value="P:translation"/>
    <property type="evidence" value="ECO:0007669"/>
    <property type="project" value="UniProtKB-UniRule"/>
</dbReference>
<dbReference type="FunFam" id="3.30.70.330:FF:000001">
    <property type="entry name" value="50S ribosomal protein L23"/>
    <property type="match status" value="1"/>
</dbReference>
<dbReference type="Gene3D" id="3.30.70.330">
    <property type="match status" value="1"/>
</dbReference>
<dbReference type="HAMAP" id="MF_01369_B">
    <property type="entry name" value="Ribosomal_uL23_B"/>
    <property type="match status" value="1"/>
</dbReference>
<dbReference type="InterPro" id="IPR012677">
    <property type="entry name" value="Nucleotide-bd_a/b_plait_sf"/>
</dbReference>
<dbReference type="InterPro" id="IPR013025">
    <property type="entry name" value="Ribosomal_uL23-like"/>
</dbReference>
<dbReference type="InterPro" id="IPR012678">
    <property type="entry name" value="Ribosomal_uL23/eL15/eS24_sf"/>
</dbReference>
<dbReference type="InterPro" id="IPR001014">
    <property type="entry name" value="Ribosomal_uL23_CS"/>
</dbReference>
<dbReference type="NCBIfam" id="NF004363">
    <property type="entry name" value="PRK05738.2-4"/>
    <property type="match status" value="1"/>
</dbReference>
<dbReference type="NCBIfam" id="NF004365">
    <property type="entry name" value="PRK05738.3-1"/>
    <property type="match status" value="1"/>
</dbReference>
<dbReference type="NCBIfam" id="NF004366">
    <property type="entry name" value="PRK05738.3-2"/>
    <property type="match status" value="1"/>
</dbReference>
<dbReference type="NCBIfam" id="NF004368">
    <property type="entry name" value="PRK05738.3-4"/>
    <property type="match status" value="1"/>
</dbReference>
<dbReference type="PANTHER" id="PTHR11620">
    <property type="entry name" value="60S RIBOSOMAL PROTEIN L23A"/>
    <property type="match status" value="1"/>
</dbReference>
<dbReference type="Pfam" id="PF00276">
    <property type="entry name" value="Ribosomal_L23"/>
    <property type="match status" value="1"/>
</dbReference>
<dbReference type="SUPFAM" id="SSF54189">
    <property type="entry name" value="Ribosomal proteins S24e, L23 and L15e"/>
    <property type="match status" value="1"/>
</dbReference>
<dbReference type="PROSITE" id="PS00050">
    <property type="entry name" value="RIBOSOMAL_L23"/>
    <property type="match status" value="1"/>
</dbReference>
<gene>
    <name evidence="1" type="primary">rplW</name>
    <name evidence="1" type="synonym">rpl23</name>
    <name type="ordered locus">Syncc9902_1957</name>
</gene>
<reference key="1">
    <citation type="submission" date="2005-08" db="EMBL/GenBank/DDBJ databases">
        <title>Complete sequence of Synechococcus sp. CC9902.</title>
        <authorList>
            <person name="Copeland A."/>
            <person name="Lucas S."/>
            <person name="Lapidus A."/>
            <person name="Barry K."/>
            <person name="Detter J.C."/>
            <person name="Glavina T."/>
            <person name="Hammon N."/>
            <person name="Israni S."/>
            <person name="Pitluck S."/>
            <person name="Martinez M."/>
            <person name="Schmutz J."/>
            <person name="Larimer F."/>
            <person name="Land M."/>
            <person name="Kyrpides N."/>
            <person name="Ivanova N."/>
            <person name="Richardson P."/>
        </authorList>
    </citation>
    <scope>NUCLEOTIDE SEQUENCE [LARGE SCALE GENOMIC DNA]</scope>
    <source>
        <strain>CC9902</strain>
    </source>
</reference>
<keyword id="KW-1185">Reference proteome</keyword>
<keyword id="KW-0687">Ribonucleoprotein</keyword>
<keyword id="KW-0689">Ribosomal protein</keyword>
<keyword id="KW-0694">RNA-binding</keyword>
<keyword id="KW-0699">rRNA-binding</keyword>
<protein>
    <recommendedName>
        <fullName evidence="1">Large ribosomal subunit protein uL23</fullName>
    </recommendedName>
    <alternativeName>
        <fullName evidence="2">50S ribosomal protein L23</fullName>
    </alternativeName>
</protein>
<accession>Q3AUW1</accession>
<organism>
    <name type="scientific">Synechococcus sp. (strain CC9902)</name>
    <dbReference type="NCBI Taxonomy" id="316279"/>
    <lineage>
        <taxon>Bacteria</taxon>
        <taxon>Bacillati</taxon>
        <taxon>Cyanobacteriota</taxon>
        <taxon>Cyanophyceae</taxon>
        <taxon>Synechococcales</taxon>
        <taxon>Synechococcaceae</taxon>
        <taxon>Synechococcus</taxon>
    </lineage>
</organism>
<proteinExistence type="inferred from homology"/>
<evidence type="ECO:0000255" key="1">
    <source>
        <dbReference type="HAMAP-Rule" id="MF_01369"/>
    </source>
</evidence>
<evidence type="ECO:0000305" key="2"/>
<sequence>MTERFQSRLADVIRRPLITEKATRALELNQYTFEVDHRAAKPDIKAAIEQLFDVKVTGISTMNPPRRSRRMGRFAGKRAQVKKAVVRLAEGNSIQLFPES</sequence>